<name>LRRT3_MACFA</name>
<feature type="signal peptide" evidence="2">
    <location>
        <begin position="1"/>
        <end position="30"/>
    </location>
</feature>
<feature type="chain" id="PRO_0000018356" description="Leucine-rich repeat transmembrane neuronal protein 3">
    <location>
        <begin position="31"/>
        <end position="581"/>
    </location>
</feature>
<feature type="topological domain" description="Extracellular" evidence="2">
    <location>
        <begin position="31"/>
        <end position="419"/>
    </location>
</feature>
<feature type="transmembrane region" description="Helical" evidence="2">
    <location>
        <begin position="420"/>
        <end position="440"/>
    </location>
</feature>
<feature type="topological domain" description="Cytoplasmic" evidence="2">
    <location>
        <begin position="441"/>
        <end position="513"/>
    </location>
</feature>
<feature type="domain" description="LRRNT">
    <location>
        <begin position="31"/>
        <end position="61"/>
    </location>
</feature>
<feature type="repeat" description="LRR 1">
    <location>
        <begin position="63"/>
        <end position="83"/>
    </location>
</feature>
<feature type="repeat" description="LRR 2">
    <location>
        <begin position="86"/>
        <end position="107"/>
    </location>
</feature>
<feature type="repeat" description="LRR 3">
    <location>
        <begin position="110"/>
        <end position="131"/>
    </location>
</feature>
<feature type="repeat" description="LRR 4">
    <location>
        <begin position="134"/>
        <end position="155"/>
    </location>
</feature>
<feature type="repeat" description="LRR 5">
    <location>
        <begin position="158"/>
        <end position="179"/>
    </location>
</feature>
<feature type="repeat" description="LRR 6">
    <location>
        <begin position="182"/>
        <end position="203"/>
    </location>
</feature>
<feature type="repeat" description="LRR 7">
    <location>
        <begin position="206"/>
        <end position="226"/>
    </location>
</feature>
<feature type="repeat" description="LRR 8">
    <location>
        <begin position="230"/>
        <end position="251"/>
    </location>
</feature>
<feature type="repeat" description="LRR 9">
    <location>
        <begin position="254"/>
        <end position="275"/>
    </location>
</feature>
<feature type="repeat" description="LRR 10">
    <location>
        <begin position="279"/>
        <end position="300"/>
    </location>
</feature>
<feature type="domain" description="LRRCT">
    <location>
        <begin position="312"/>
        <end position="363"/>
    </location>
</feature>
<feature type="region of interest" description="Disordered" evidence="3">
    <location>
        <begin position="377"/>
        <end position="408"/>
    </location>
</feature>
<feature type="glycosylation site" description="N-linked (GlcNAc...) asparagine" evidence="2">
    <location>
        <position position="126"/>
    </location>
</feature>
<feature type="glycosylation site" description="N-linked (GlcNAc...) asparagine" evidence="2">
    <location>
        <position position="357"/>
    </location>
</feature>
<feature type="sequence conflict" description="In Ref. 2; BAB46868." evidence="4" ref="2">
    <original>R</original>
    <variation>W</variation>
    <location>
        <position position="165"/>
    </location>
</feature>
<feature type="sequence conflict" description="In Ref. 2; BAB46868." evidence="4" ref="2">
    <original>D</original>
    <variation>N</variation>
    <location>
        <position position="179"/>
    </location>
</feature>
<feature type="sequence conflict" description="In Ref. 2; BAB46868." evidence="4" ref="2">
    <original>D</original>
    <variation>A</variation>
    <location>
        <position position="409"/>
    </location>
</feature>
<keyword id="KW-1003">Cell membrane</keyword>
<keyword id="KW-0325">Glycoprotein</keyword>
<keyword id="KW-0433">Leucine-rich repeat</keyword>
<keyword id="KW-0472">Membrane</keyword>
<keyword id="KW-0628">Postsynaptic cell membrane</keyword>
<keyword id="KW-1185">Reference proteome</keyword>
<keyword id="KW-0677">Repeat</keyword>
<keyword id="KW-0732">Signal</keyword>
<keyword id="KW-0770">Synapse</keyword>
<keyword id="KW-0812">Transmembrane</keyword>
<keyword id="KW-1133">Transmembrane helix</keyword>
<dbReference type="EMBL" id="AB056426">
    <property type="protein sequence ID" value="BAB33084.1"/>
    <property type="molecule type" value="mRNA"/>
</dbReference>
<dbReference type="EMBL" id="AB060846">
    <property type="protein sequence ID" value="BAB46868.1"/>
    <property type="molecule type" value="mRNA"/>
</dbReference>
<dbReference type="RefSeq" id="NP_001270759.1">
    <property type="nucleotide sequence ID" value="NM_001283830.1"/>
</dbReference>
<dbReference type="RefSeq" id="XP_015311390.1">
    <property type="nucleotide sequence ID" value="XM_015455904.3"/>
</dbReference>
<dbReference type="SMR" id="Q9BGP6"/>
<dbReference type="STRING" id="9541.ENSMFAP00000004662"/>
<dbReference type="GlyCosmos" id="Q9BGP6">
    <property type="glycosylation" value="2 sites, No reported glycans"/>
</dbReference>
<dbReference type="Ensembl" id="ENSMFAT00000023331.2">
    <property type="protein sequence ID" value="ENSMFAP00000004665.2"/>
    <property type="gene ID" value="ENSMFAG00000002037.2"/>
</dbReference>
<dbReference type="GeneID" id="102136420"/>
<dbReference type="KEGG" id="mcf:102136420"/>
<dbReference type="CTD" id="347731"/>
<dbReference type="VEuPathDB" id="HostDB:ENSMFAG00000002037"/>
<dbReference type="eggNOG" id="KOG0619">
    <property type="taxonomic scope" value="Eukaryota"/>
</dbReference>
<dbReference type="GeneTree" id="ENSGT00940000160543"/>
<dbReference type="OrthoDB" id="5846at314294"/>
<dbReference type="Proteomes" id="UP000233100">
    <property type="component" value="Chromosome 9"/>
</dbReference>
<dbReference type="Bgee" id="ENSMFAG00000002037">
    <property type="expression patterns" value="Expressed in temporal lobe and 5 other cell types or tissues"/>
</dbReference>
<dbReference type="GO" id="GO:0098978">
    <property type="term" value="C:glutamatergic synapse"/>
    <property type="evidence" value="ECO:0007669"/>
    <property type="project" value="Ensembl"/>
</dbReference>
<dbReference type="GO" id="GO:0098839">
    <property type="term" value="C:postsynaptic density membrane"/>
    <property type="evidence" value="ECO:0007669"/>
    <property type="project" value="Ensembl"/>
</dbReference>
<dbReference type="GO" id="GO:1902004">
    <property type="term" value="P:positive regulation of amyloid-beta formation"/>
    <property type="evidence" value="ECO:0007669"/>
    <property type="project" value="Ensembl"/>
</dbReference>
<dbReference type="GO" id="GO:0051965">
    <property type="term" value="P:positive regulation of synapse assembly"/>
    <property type="evidence" value="ECO:0007669"/>
    <property type="project" value="Ensembl"/>
</dbReference>
<dbReference type="GO" id="GO:1905606">
    <property type="term" value="P:regulation of presynapse assembly"/>
    <property type="evidence" value="ECO:0007669"/>
    <property type="project" value="Ensembl"/>
</dbReference>
<dbReference type="FunFam" id="3.80.10.10:FF:000005">
    <property type="entry name" value="leucine-rich repeat transmembrane neuronal protein 4"/>
    <property type="match status" value="1"/>
</dbReference>
<dbReference type="Gene3D" id="3.80.10.10">
    <property type="entry name" value="Ribonuclease Inhibitor"/>
    <property type="match status" value="1"/>
</dbReference>
<dbReference type="InterPro" id="IPR001611">
    <property type="entry name" value="Leu-rich_rpt"/>
</dbReference>
<dbReference type="InterPro" id="IPR003591">
    <property type="entry name" value="Leu-rich_rpt_typical-subtyp"/>
</dbReference>
<dbReference type="InterPro" id="IPR032675">
    <property type="entry name" value="LRR_dom_sf"/>
</dbReference>
<dbReference type="InterPro" id="IPR050541">
    <property type="entry name" value="LRR_TM_domain-containing"/>
</dbReference>
<dbReference type="InterPro" id="IPR000372">
    <property type="entry name" value="LRRNT"/>
</dbReference>
<dbReference type="PANTHER" id="PTHR24369">
    <property type="entry name" value="ANTIGEN BSP, PUTATIVE-RELATED"/>
    <property type="match status" value="1"/>
</dbReference>
<dbReference type="PANTHER" id="PTHR24369:SF218">
    <property type="entry name" value="LEUCINE RICH REPEAT TRANSMEMBRANE NEURONAL 3"/>
    <property type="match status" value="1"/>
</dbReference>
<dbReference type="Pfam" id="PF00560">
    <property type="entry name" value="LRR_1"/>
    <property type="match status" value="1"/>
</dbReference>
<dbReference type="Pfam" id="PF13855">
    <property type="entry name" value="LRR_8"/>
    <property type="match status" value="3"/>
</dbReference>
<dbReference type="SMART" id="SM00365">
    <property type="entry name" value="LRR_SD22"/>
    <property type="match status" value="5"/>
</dbReference>
<dbReference type="SMART" id="SM00369">
    <property type="entry name" value="LRR_TYP"/>
    <property type="match status" value="9"/>
</dbReference>
<dbReference type="SMART" id="SM00013">
    <property type="entry name" value="LRRNT"/>
    <property type="match status" value="1"/>
</dbReference>
<dbReference type="SUPFAM" id="SSF52058">
    <property type="entry name" value="L domain-like"/>
    <property type="match status" value="1"/>
</dbReference>
<dbReference type="PROSITE" id="PS51450">
    <property type="entry name" value="LRR"/>
    <property type="match status" value="9"/>
</dbReference>
<evidence type="ECO:0000250" key="1"/>
<evidence type="ECO:0000255" key="2"/>
<evidence type="ECO:0000256" key="3">
    <source>
        <dbReference type="SAM" id="MobiDB-lite"/>
    </source>
</evidence>
<evidence type="ECO:0000305" key="4"/>
<sequence>MGFNVIRLLSGSAVALVIAPTVLLTMLSSAERGCPKGCRCEGKMVYCESQKLQEIPSSISAGCLGLSLRYNSLQKLKYNQFKGLNQLTWLYLDHNHISNIDENAFNGIRRLKELILSSNRISYFLNNTFRPVTNLRNLDLSYNQLHSLGSEQFRGLRKLLSLHLRSNSLRTIPVRIFQDCRNLELLDLGYNRIRSLARNVFAGMIRLKELHLEHNQFSKLNLALFPRLVSLQNLYLQWNKISVIGQTMSWTWSSLQRLDLSGNEIEAFSGPSVFQCVPNLQRLNLDSNKLTFIGQEILDSWISLNDISLAGNIWECSRNICSLVNWLKSFKGLRENTIICASPKELQGVNVIDAVKNYSICGKSTTERFDLARALPKPTFKPKLPRPKHESKPPLPPTVGATEPGPETDADAEHISFHKIIAGSVALFLSVLVILLVIYVSWKRYPASMKQLQQRSLMRRHRKKKRQSLKQMTPSTQEFYVDYKPTNTETSEMLLNGTGPCTYNKSGSRECEIPLSMNVSTFLAYDQPTISYCGVHHELLSHKSFETNAQEDTMETHLETELDLSTITTAGRISDHKQQLA</sequence>
<accession>Q9BGP6</accession>
<accession>Q95KI8</accession>
<reference key="1">
    <citation type="journal article" date="2002" name="Genome Biol.">
        <title>Prediction of unidentified human genes on the basis of sequence similarity to novel cDNAs from cynomolgus monkey brain.</title>
        <authorList>
            <person name="Osada N."/>
            <person name="Hida M."/>
            <person name="Kusuda J."/>
            <person name="Tanuma R."/>
            <person name="Hirata M."/>
            <person name="Hirai M."/>
            <person name="Terao K."/>
            <person name="Suzuki Y."/>
            <person name="Sugano S."/>
            <person name="Hashimoto K."/>
        </authorList>
    </citation>
    <scope>NUCLEOTIDE SEQUENCE [LARGE SCALE MRNA]</scope>
    <source>
        <tissue>Frontal cortex</tissue>
    </source>
</reference>
<reference key="2">
    <citation type="submission" date="2001-04" db="EMBL/GenBank/DDBJ databases">
        <title>Isolation of full-length cDNA clones from macaque brain cDNA libraries.</title>
        <authorList>
            <person name="Osada N."/>
            <person name="Hida M."/>
            <person name="Kusuda J."/>
            <person name="Tanuma R."/>
            <person name="Iseki K."/>
            <person name="Hirai M."/>
            <person name="Terao K."/>
            <person name="Suzuki Y."/>
            <person name="Sugano S."/>
            <person name="Hashimoto K."/>
        </authorList>
    </citation>
    <scope>NUCLEOTIDE SEQUENCE [LARGE SCALE MRNA]</scope>
    <source>
        <tissue>Temporal cortex</tissue>
    </source>
</reference>
<gene>
    <name type="primary">LRRTM3</name>
    <name type="ORF">QflA-15366</name>
    <name type="ORF">QtrA-11009</name>
</gene>
<protein>
    <recommendedName>
        <fullName>Leucine-rich repeat transmembrane neuronal protein 3</fullName>
    </recommendedName>
</protein>
<organism>
    <name type="scientific">Macaca fascicularis</name>
    <name type="common">Crab-eating macaque</name>
    <name type="synonym">Cynomolgus monkey</name>
    <dbReference type="NCBI Taxonomy" id="9541"/>
    <lineage>
        <taxon>Eukaryota</taxon>
        <taxon>Metazoa</taxon>
        <taxon>Chordata</taxon>
        <taxon>Craniata</taxon>
        <taxon>Vertebrata</taxon>
        <taxon>Euteleostomi</taxon>
        <taxon>Mammalia</taxon>
        <taxon>Eutheria</taxon>
        <taxon>Euarchontoglires</taxon>
        <taxon>Primates</taxon>
        <taxon>Haplorrhini</taxon>
        <taxon>Catarrhini</taxon>
        <taxon>Cercopithecidae</taxon>
        <taxon>Cercopithecinae</taxon>
        <taxon>Macaca</taxon>
    </lineage>
</organism>
<proteinExistence type="evidence at transcript level"/>
<comment type="function">
    <text evidence="1">May play a role in the development and maintenance of the vertebrate nervous system. Exhibits a limited synaptogenic activity in vitro, restricted to excitatory presynaptic differentiation (By similarity).</text>
</comment>
<comment type="subcellular location">
    <subcellularLocation>
        <location evidence="1">Cell membrane</location>
        <topology evidence="1">Single-pass type I membrane protein</topology>
    </subcellularLocation>
    <subcellularLocation>
        <location evidence="1">Postsynaptic cell membrane</location>
        <topology evidence="1">Single-pass type I membrane protein</topology>
    </subcellularLocation>
</comment>
<comment type="similarity">
    <text evidence="4">Belongs to the LRRTM family.</text>
</comment>